<feature type="chain" id="PRO_0000359864" description="Photosystem II CP47 reaction center protein">
    <location>
        <begin position="1"/>
        <end position="508"/>
    </location>
</feature>
<feature type="transmembrane region" description="Helical" evidence="1">
    <location>
        <begin position="21"/>
        <end position="36"/>
    </location>
</feature>
<feature type="transmembrane region" description="Helical" evidence="1">
    <location>
        <begin position="101"/>
        <end position="115"/>
    </location>
</feature>
<feature type="transmembrane region" description="Helical" evidence="1">
    <location>
        <begin position="140"/>
        <end position="156"/>
    </location>
</feature>
<feature type="transmembrane region" description="Helical" evidence="1">
    <location>
        <begin position="203"/>
        <end position="218"/>
    </location>
</feature>
<feature type="transmembrane region" description="Helical" evidence="1">
    <location>
        <begin position="237"/>
        <end position="252"/>
    </location>
</feature>
<feature type="transmembrane region" description="Helical" evidence="1">
    <location>
        <begin position="457"/>
        <end position="472"/>
    </location>
</feature>
<sequence length="508" mass="56399">MALPWYRVHTVVLNDPGRLIAVHLMHTALVSGWAGSMALYELAVFDPSDPILDPMWRQGMFVIPFMTRLGVTKSWGGWSITGETITNAGLWSYEGVAATHIILSGLLFLAAIWHWVYWDLELFRDERTGKPSLDLPKIFGIHLFLSGVLCFGFGAFHVTGLFGPGIWVSDPYGLTGNVQPVIPAWGAEGFDPFNPGGIASHHIAAGILGIIAGLFHLSVRPPQRLYKGLRMGNIETVLSSSIAAVFWAAFVVAGTMWYGSAATPVELFGPTRYQWDQGYFQQEIERRIRTSLDEGLSLSEAWSKIPEKLAFYDYIGNNPAKGGLFRAGAMDNGDGIAVGWLGHAVFKDKEGNELFVRRMPTFFETFPVVLLDKDGVVRADVPFRRAESKYSIEQVGVSVEFYGGELNGVSFSDPATVKKYARRAQLGEIFEFDRATLKSDGVFRSSPRGWFTFGHANFALLFFFGHIWHGSRTLFRDVFSGIDPDLESQVEFGLFQKLGDPTTRKQAV</sequence>
<name>PSBB_STAPU</name>
<proteinExistence type="inferred from homology"/>
<dbReference type="EMBL" id="AY958085">
    <property type="protein sequence ID" value="AAX45722.1"/>
    <property type="molecule type" value="Genomic_DNA"/>
</dbReference>
<dbReference type="RefSeq" id="YP_636435.1">
    <property type="nucleotide sequence ID" value="NC_008116.1"/>
</dbReference>
<dbReference type="SMR" id="Q32RU1"/>
<dbReference type="GeneID" id="4108681"/>
<dbReference type="GO" id="GO:0009535">
    <property type="term" value="C:chloroplast thylakoid membrane"/>
    <property type="evidence" value="ECO:0007669"/>
    <property type="project" value="UniProtKB-SubCell"/>
</dbReference>
<dbReference type="GO" id="GO:0009523">
    <property type="term" value="C:photosystem II"/>
    <property type="evidence" value="ECO:0007669"/>
    <property type="project" value="UniProtKB-KW"/>
</dbReference>
<dbReference type="GO" id="GO:0016168">
    <property type="term" value="F:chlorophyll binding"/>
    <property type="evidence" value="ECO:0007669"/>
    <property type="project" value="UniProtKB-UniRule"/>
</dbReference>
<dbReference type="GO" id="GO:0045156">
    <property type="term" value="F:electron transporter, transferring electrons within the cyclic electron transport pathway of photosynthesis activity"/>
    <property type="evidence" value="ECO:0007669"/>
    <property type="project" value="InterPro"/>
</dbReference>
<dbReference type="GO" id="GO:0009772">
    <property type="term" value="P:photosynthetic electron transport in photosystem II"/>
    <property type="evidence" value="ECO:0007669"/>
    <property type="project" value="InterPro"/>
</dbReference>
<dbReference type="FunFam" id="3.10.680.10:FF:000001">
    <property type="entry name" value="Photosystem II CP47 reaction center protein"/>
    <property type="match status" value="1"/>
</dbReference>
<dbReference type="Gene3D" id="3.10.680.10">
    <property type="entry name" value="Photosystem II CP47 reaction center protein"/>
    <property type="match status" value="1"/>
</dbReference>
<dbReference type="HAMAP" id="MF_01495">
    <property type="entry name" value="PSII_PsbB_CP47"/>
    <property type="match status" value="1"/>
</dbReference>
<dbReference type="InterPro" id="IPR000932">
    <property type="entry name" value="PS_antenna-like"/>
</dbReference>
<dbReference type="InterPro" id="IPR036001">
    <property type="entry name" value="PS_II_antenna-like_sf"/>
</dbReference>
<dbReference type="InterPro" id="IPR017486">
    <property type="entry name" value="PSII_PsbB"/>
</dbReference>
<dbReference type="NCBIfam" id="TIGR03039">
    <property type="entry name" value="PS_II_CP47"/>
    <property type="match status" value="1"/>
</dbReference>
<dbReference type="Pfam" id="PF00421">
    <property type="entry name" value="PSII"/>
    <property type="match status" value="1"/>
</dbReference>
<dbReference type="SUPFAM" id="SSF161077">
    <property type="entry name" value="Photosystem II antenna protein-like"/>
    <property type="match status" value="1"/>
</dbReference>
<comment type="function">
    <text evidence="1">One of the components of the core complex of photosystem II (PSII). It binds chlorophyll and helps catalyze the primary light-induced photochemical processes of PSII. PSII is a light-driven water:plastoquinone oxidoreductase, using light energy to abstract electrons from H(2)O, generating O(2) and a proton gradient subsequently used for ATP formation.</text>
</comment>
<comment type="cofactor">
    <text evidence="1">Binds multiple chlorophylls. PSII binds additional chlorophylls, carotenoids and specific lipids.</text>
</comment>
<comment type="subunit">
    <text evidence="1">PSII is composed of 1 copy each of membrane proteins PsbA, PsbB, PsbC, PsbD, PsbE, PsbF, PsbH, PsbI, PsbJ, PsbK, PsbL, PsbM, PsbT, PsbX, PsbY, PsbZ, Psb30/Ycf12, at least 3 peripheral proteins of the oxygen-evolving complex and a large number of cofactors. It forms dimeric complexes.</text>
</comment>
<comment type="subcellular location">
    <subcellularLocation>
        <location evidence="1">Plastid</location>
        <location evidence="1">Chloroplast thylakoid membrane</location>
        <topology evidence="1">Multi-pass membrane protein</topology>
    </subcellularLocation>
</comment>
<comment type="similarity">
    <text evidence="1">Belongs to the PsbB/PsbC family. PsbB subfamily.</text>
</comment>
<accession>Q32RU1</accession>
<organism>
    <name type="scientific">Staurastrum punctulatum</name>
    <name type="common">Green alga</name>
    <name type="synonym">Cosmoastrum punctulatum</name>
    <dbReference type="NCBI Taxonomy" id="102822"/>
    <lineage>
        <taxon>Eukaryota</taxon>
        <taxon>Viridiplantae</taxon>
        <taxon>Streptophyta</taxon>
        <taxon>Zygnematophyceae</taxon>
        <taxon>Zygnematophycidae</taxon>
        <taxon>Desmidiales</taxon>
        <taxon>Desmidiaceae</taxon>
        <taxon>Staurastrum</taxon>
    </lineage>
</organism>
<gene>
    <name evidence="1" type="primary">psbB</name>
</gene>
<geneLocation type="chloroplast"/>
<evidence type="ECO:0000255" key="1">
    <source>
        <dbReference type="HAMAP-Rule" id="MF_01495"/>
    </source>
</evidence>
<protein>
    <recommendedName>
        <fullName evidence="1">Photosystem II CP47 reaction center protein</fullName>
    </recommendedName>
    <alternativeName>
        <fullName evidence="1">PSII 47 kDa protein</fullName>
    </alternativeName>
    <alternativeName>
        <fullName evidence="1">Protein CP-47</fullName>
    </alternativeName>
</protein>
<reference key="1">
    <citation type="journal article" date="2005" name="BMC Biol.">
        <title>The complete chloroplast DNA sequences of the charophycean green algae Staurastrum and Zygnema reveal that the chloroplast genome underwent extensive changes during the evolution of the Zygnematales.</title>
        <authorList>
            <person name="Turmel M."/>
            <person name="Otis C."/>
            <person name="Lemieux C."/>
        </authorList>
    </citation>
    <scope>NUCLEOTIDE SEQUENCE [LARGE SCALE GENOMIC DNA]</scope>
</reference>
<keyword id="KW-0148">Chlorophyll</keyword>
<keyword id="KW-0150">Chloroplast</keyword>
<keyword id="KW-0157">Chromophore</keyword>
<keyword id="KW-0472">Membrane</keyword>
<keyword id="KW-0602">Photosynthesis</keyword>
<keyword id="KW-0604">Photosystem II</keyword>
<keyword id="KW-0934">Plastid</keyword>
<keyword id="KW-0793">Thylakoid</keyword>
<keyword id="KW-0812">Transmembrane</keyword>
<keyword id="KW-1133">Transmembrane helix</keyword>